<keyword id="KW-0472">Membrane</keyword>
<keyword id="KW-0509">mRNA transport</keyword>
<keyword id="KW-0906">Nuclear pore complex</keyword>
<keyword id="KW-0539">Nucleus</keyword>
<keyword id="KW-0653">Protein transport</keyword>
<keyword id="KW-1185">Reference proteome</keyword>
<keyword id="KW-0811">Translocation</keyword>
<keyword id="KW-0812">Transmembrane</keyword>
<keyword id="KW-1133">Transmembrane helix</keyword>
<keyword id="KW-0813">Transport</keyword>
<evidence type="ECO:0000250" key="1">
    <source>
        <dbReference type="UniProtKB" id="P39685"/>
    </source>
</evidence>
<evidence type="ECO:0000255" key="2"/>
<evidence type="ECO:0000269" key="3">
    <source>
    </source>
</evidence>
<evidence type="ECO:0000269" key="4">
    <source>
    </source>
</evidence>
<evidence type="ECO:0000305" key="5"/>
<evidence type="ECO:0000312" key="6">
    <source>
        <dbReference type="EMBL" id="BAA87205.1"/>
    </source>
</evidence>
<evidence type="ECO:0000312" key="7">
    <source>
        <dbReference type="EMBL" id="CAA22435.1"/>
    </source>
</evidence>
<gene>
    <name type="primary">pom152</name>
    <name type="ORF">SPBC29A10.07</name>
</gene>
<reference evidence="7" key="1">
    <citation type="journal article" date="2002" name="Nature">
        <title>The genome sequence of Schizosaccharomyces pombe.</title>
        <authorList>
            <person name="Wood V."/>
            <person name="Gwilliam R."/>
            <person name="Rajandream M.A."/>
            <person name="Lyne M.H."/>
            <person name="Lyne R."/>
            <person name="Stewart A."/>
            <person name="Sgouros J.G."/>
            <person name="Peat N."/>
            <person name="Hayles J."/>
            <person name="Baker S.G."/>
            <person name="Basham D."/>
            <person name="Bowman S."/>
            <person name="Brooks K."/>
            <person name="Brown D."/>
            <person name="Brown S."/>
            <person name="Chillingworth T."/>
            <person name="Churcher C.M."/>
            <person name="Collins M."/>
            <person name="Connor R."/>
            <person name="Cronin A."/>
            <person name="Davis P."/>
            <person name="Feltwell T."/>
            <person name="Fraser A."/>
            <person name="Gentles S."/>
            <person name="Goble A."/>
            <person name="Hamlin N."/>
            <person name="Harris D.E."/>
            <person name="Hidalgo J."/>
            <person name="Hodgson G."/>
            <person name="Holroyd S."/>
            <person name="Hornsby T."/>
            <person name="Howarth S."/>
            <person name="Huckle E.J."/>
            <person name="Hunt S."/>
            <person name="Jagels K."/>
            <person name="James K.D."/>
            <person name="Jones L."/>
            <person name="Jones M."/>
            <person name="Leather S."/>
            <person name="McDonald S."/>
            <person name="McLean J."/>
            <person name="Mooney P."/>
            <person name="Moule S."/>
            <person name="Mungall K.L."/>
            <person name="Murphy L.D."/>
            <person name="Niblett D."/>
            <person name="Odell C."/>
            <person name="Oliver K."/>
            <person name="O'Neil S."/>
            <person name="Pearson D."/>
            <person name="Quail M.A."/>
            <person name="Rabbinowitsch E."/>
            <person name="Rutherford K.M."/>
            <person name="Rutter S."/>
            <person name="Saunders D."/>
            <person name="Seeger K."/>
            <person name="Sharp S."/>
            <person name="Skelton J."/>
            <person name="Simmonds M.N."/>
            <person name="Squares R."/>
            <person name="Squares S."/>
            <person name="Stevens K."/>
            <person name="Taylor K."/>
            <person name="Taylor R.G."/>
            <person name="Tivey A."/>
            <person name="Walsh S.V."/>
            <person name="Warren T."/>
            <person name="Whitehead S."/>
            <person name="Woodward J.R."/>
            <person name="Volckaert G."/>
            <person name="Aert R."/>
            <person name="Robben J."/>
            <person name="Grymonprez B."/>
            <person name="Weltjens I."/>
            <person name="Vanstreels E."/>
            <person name="Rieger M."/>
            <person name="Schaefer M."/>
            <person name="Mueller-Auer S."/>
            <person name="Gabel C."/>
            <person name="Fuchs M."/>
            <person name="Duesterhoeft A."/>
            <person name="Fritzc C."/>
            <person name="Holzer E."/>
            <person name="Moestl D."/>
            <person name="Hilbert H."/>
            <person name="Borzym K."/>
            <person name="Langer I."/>
            <person name="Beck A."/>
            <person name="Lehrach H."/>
            <person name="Reinhardt R."/>
            <person name="Pohl T.M."/>
            <person name="Eger P."/>
            <person name="Zimmermann W."/>
            <person name="Wedler H."/>
            <person name="Wambutt R."/>
            <person name="Purnelle B."/>
            <person name="Goffeau A."/>
            <person name="Cadieu E."/>
            <person name="Dreano S."/>
            <person name="Gloux S."/>
            <person name="Lelaure V."/>
            <person name="Mottier S."/>
            <person name="Galibert F."/>
            <person name="Aves S.J."/>
            <person name="Xiang Z."/>
            <person name="Hunt C."/>
            <person name="Moore K."/>
            <person name="Hurst S.M."/>
            <person name="Lucas M."/>
            <person name="Rochet M."/>
            <person name="Gaillardin C."/>
            <person name="Tallada V.A."/>
            <person name="Garzon A."/>
            <person name="Thode G."/>
            <person name="Daga R.R."/>
            <person name="Cruzado L."/>
            <person name="Jimenez J."/>
            <person name="Sanchez M."/>
            <person name="del Rey F."/>
            <person name="Benito J."/>
            <person name="Dominguez A."/>
            <person name="Revuelta J.L."/>
            <person name="Moreno S."/>
            <person name="Armstrong J."/>
            <person name="Forsburg S.L."/>
            <person name="Cerutti L."/>
            <person name="Lowe T."/>
            <person name="McCombie W.R."/>
            <person name="Paulsen I."/>
            <person name="Potashkin J."/>
            <person name="Shpakovski G.V."/>
            <person name="Ussery D."/>
            <person name="Barrell B.G."/>
            <person name="Nurse P."/>
        </authorList>
    </citation>
    <scope>NUCLEOTIDE SEQUENCE [LARGE SCALE GENOMIC DNA]</scope>
    <source>
        <strain>972 / ATCC 24843</strain>
    </source>
</reference>
<reference evidence="5 6" key="2">
    <citation type="journal article" date="2000" name="Genes Cells">
        <title>Large-scale screening of intracellular protein localization in living fission yeast cells by the use of a GFP-fusion genomic DNA library.</title>
        <authorList>
            <person name="Ding D.-Q."/>
            <person name="Tomita Y."/>
            <person name="Yamamoto A."/>
            <person name="Chikashige Y."/>
            <person name="Haraguchi T."/>
            <person name="Hiraoka Y."/>
        </authorList>
    </citation>
    <scope>NUCLEOTIDE SEQUENCE [LARGE SCALE GENOMIC DNA] OF 311-547</scope>
    <scope>SUBCELLULAR LOCATION</scope>
    <source>
        <strain>ATCC 38364 / 968</strain>
    </source>
</reference>
<reference key="3">
    <citation type="journal article" date="2006" name="Nat. Biotechnol.">
        <title>ORFeome cloning and global analysis of protein localization in the fission yeast Schizosaccharomyces pombe.</title>
        <authorList>
            <person name="Matsuyama A."/>
            <person name="Arai R."/>
            <person name="Yashiroda Y."/>
            <person name="Shirai A."/>
            <person name="Kamata A."/>
            <person name="Sekido S."/>
            <person name="Kobayashi Y."/>
            <person name="Hashimoto A."/>
            <person name="Hamamoto M."/>
            <person name="Hiraoka Y."/>
            <person name="Horinouchi S."/>
            <person name="Yoshida M."/>
        </authorList>
    </citation>
    <scope>SUBCELLULAR LOCATION [LARGE SCALE ANALYSIS]</scope>
</reference>
<accession>O94385</accession>
<accession>Q9USB0</accession>
<feature type="chain" id="PRO_0000224645" description="Nucleoporin pom152">
    <location>
        <begin position="1"/>
        <end position="1250"/>
    </location>
</feature>
<feature type="transmembrane region" description="Helical" evidence="2">
    <location>
        <begin position="80"/>
        <end position="100"/>
    </location>
</feature>
<feature type="region of interest" description="Pore side" evidence="2">
    <location>
        <begin position="1"/>
        <end position="79"/>
    </location>
</feature>
<feature type="region of interest" description="Cisternal side" evidence="2">
    <location>
        <begin position="101"/>
        <end position="1250"/>
    </location>
</feature>
<sequence length="1250" mass="139585">MVTRVASSERPRPLVPESIVDAPTQRLYAIGVFVALQAYKIYDLLKLETSSISDVPKSGFLVKWIIIDAIYLRLLPKFRIPWLSFQPAATLLQIAIFAAINLLLSSLSSLKWISIGSILLPYFKKKELSISEHKINPNNVIHNSSRILGQYTLQVLPEGTAKINPLHENYCLNSLRKDQYVDLAIQFNSTIPKYIQYSHVDLETKEETLVEVSGRSLRKLLSSSSKNPKEPRLQTIYLKTNKRGLYTLKHVVDKSKLDVRIFRSEAVVVSCPTATFASRQSGGRLRERCVGDTDNAELKVTGVAPLQVTYRNWDGKHFNTHIIDSTIPDDFHPPAVVLSSNPKDIVFYKGIDIQWARSSEIFVPINTLLKAPGQWIYAVTQVTDALGNSQQFPSNDQFLLRFAHGYTEADGESHSLPENVYSVFVHQRPDIQFRGCSIESPANLFPNKETSLSLYSSFSEYNSLEVGVDRYELGLDPQNITVPPLSHKTYQISPRSSANINVKKPGIYVLSSVSSQYCSGEVLEPNTCLVVTPPEAKVSVSFEEISDQCAGSIGARADLELEGTPPFTIAYRMTKDNEASRIQYVTTDRTRYQLNFTPKKAGKYRYIILGIQDANYGYRELSGSSFYKDQTVFPLADASFEERRNGDLSTVVKTSCIGDTMSLPVLLTGSAPWTLEYEIFRNNKREESHVVESKDPRYILEVPMLVHGSQYTITLVSVKDSNGCKRSLNTADTVIKVRRQRPTATFYSSDNTYTLKSVEGALMKIPLRLAGEKPWYVEYSHTSGLNKVSHHKEVLNDPNSYLTVRKSGTYTLLSVSDSSCPGTIQNVEQKYQVEWLPRPFLSIPSLESSVKGKTRYYEQNAVCAGDSSAFEVQLSGSGPFLLKHDKILVDEKSKTYPKQKSELSTVQNTVLVKADTAVPGVYHYEFTKLSDSLYSDSDAVTIVNNQSYQAVVLQRVNSLPKASFMNVEKLYTFCINTDVTQSNAQLIAIQLQGASPFSLVIGIKNELTGSVSKYTLNDIHESVYKFAFPQEQLTLGKHVVRLLQVRDANGCAASITKTQPAAKVSVVEMASLAPLGSRQYYCVGDRLSFALQGLPPFDVEYEFNGVTQHATSDSHILTRLIELPGVVAMKSISDHGSHCKSYINPPIEQIVHDIPTVRISNGKDVIENIHEGDQAEISFHFTGTPPFSFSYARRALGKKRPGKVLETHTVTGINEYEYKVLSSVEGVYTVLSVQDKYCRYPQDSTSSSNI</sequence>
<protein>
    <recommendedName>
        <fullName>Nucleoporin pom152</fullName>
    </recommendedName>
</protein>
<comment type="function">
    <text evidence="1">Functions as a component of the nuclear pore complex (NPC). NPC components, collectively referred to as nucleoporins (NUPs), can play the role of both NPC structural components and of docking or interaction partners for transiently associated nuclear transport factors (By similarity).</text>
</comment>
<comment type="subunit">
    <text evidence="1">Component of the nuclear pore complex (NPC). NPC constitutes the exclusive means of nucleocytoplasmic transport. NPCs allow the passive diffusion of ions and small molecules and the active, nuclear transport receptor-mediated bidirectional transport of macromolecules such as proteins, RNAs, ribonucleoparticles (RNPs), and ribosomal subunits across the nuclear envelope (By similarity).</text>
</comment>
<comment type="subcellular location">
    <subcellularLocation>
        <location evidence="4">Nucleus</location>
        <location evidence="4">Nuclear pore complex</location>
    </subcellularLocation>
    <subcellularLocation>
        <location evidence="3 4">Nucleus membrane</location>
        <topology>Single-pass type II membrane protein</topology>
    </subcellularLocation>
    <text evidence="4">Central core structure of the nuclear pore complex.</text>
</comment>
<comment type="sequence caution" evidence="5">
    <conflict type="frameshift">
        <sequence resource="EMBL-CDS" id="BAA87205"/>
    </conflict>
</comment>
<proteinExistence type="inferred from homology"/>
<organism>
    <name type="scientific">Schizosaccharomyces pombe (strain 972 / ATCC 24843)</name>
    <name type="common">Fission yeast</name>
    <dbReference type="NCBI Taxonomy" id="284812"/>
    <lineage>
        <taxon>Eukaryota</taxon>
        <taxon>Fungi</taxon>
        <taxon>Dikarya</taxon>
        <taxon>Ascomycota</taxon>
        <taxon>Taphrinomycotina</taxon>
        <taxon>Schizosaccharomycetes</taxon>
        <taxon>Schizosaccharomycetales</taxon>
        <taxon>Schizosaccharomycetaceae</taxon>
        <taxon>Schizosaccharomyces</taxon>
    </lineage>
</organism>
<dbReference type="EMBL" id="CU329671">
    <property type="protein sequence ID" value="CAA22435.1"/>
    <property type="molecule type" value="Genomic_DNA"/>
</dbReference>
<dbReference type="EMBL" id="AB027901">
    <property type="protein sequence ID" value="BAA87205.1"/>
    <property type="status" value="ALT_FRAME"/>
    <property type="molecule type" value="Genomic_DNA"/>
</dbReference>
<dbReference type="PIR" id="T40062">
    <property type="entry name" value="T40062"/>
</dbReference>
<dbReference type="RefSeq" id="NP_596052.1">
    <property type="nucleotide sequence ID" value="NM_001021963.2"/>
</dbReference>
<dbReference type="BioGRID" id="276957">
    <property type="interactions" value="21"/>
</dbReference>
<dbReference type="FunCoup" id="O94385">
    <property type="interactions" value="105"/>
</dbReference>
<dbReference type="IntAct" id="O94385">
    <property type="interactions" value="1"/>
</dbReference>
<dbReference type="MINT" id="O94385"/>
<dbReference type="STRING" id="284812.O94385"/>
<dbReference type="iPTMnet" id="O94385"/>
<dbReference type="PaxDb" id="4896-SPBC29A10.07.1"/>
<dbReference type="EnsemblFungi" id="SPBC29A10.07.1">
    <property type="protein sequence ID" value="SPBC29A10.07.1:pep"/>
    <property type="gene ID" value="SPBC29A10.07"/>
</dbReference>
<dbReference type="GeneID" id="2540429"/>
<dbReference type="KEGG" id="spo:2540429"/>
<dbReference type="PomBase" id="SPBC29A10.07">
    <property type="gene designation" value="pom152"/>
</dbReference>
<dbReference type="VEuPathDB" id="FungiDB:SPBC29A10.07"/>
<dbReference type="eggNOG" id="ENOG502QQ5B">
    <property type="taxonomic scope" value="Eukaryota"/>
</dbReference>
<dbReference type="HOGENOM" id="CLU_002415_0_0_1"/>
<dbReference type="InParanoid" id="O94385"/>
<dbReference type="OMA" id="DRSNCKR"/>
<dbReference type="PhylomeDB" id="O94385"/>
<dbReference type="PRO" id="PR:O94385"/>
<dbReference type="Proteomes" id="UP000002485">
    <property type="component" value="Chromosome II"/>
</dbReference>
<dbReference type="GO" id="GO:0005635">
    <property type="term" value="C:nuclear envelope"/>
    <property type="evidence" value="ECO:0007005"/>
    <property type="project" value="PomBase"/>
</dbReference>
<dbReference type="GO" id="GO:0031965">
    <property type="term" value="C:nuclear membrane"/>
    <property type="evidence" value="ECO:0007669"/>
    <property type="project" value="UniProtKB-SubCell"/>
</dbReference>
<dbReference type="GO" id="GO:0005643">
    <property type="term" value="C:nuclear pore"/>
    <property type="evidence" value="ECO:0000314"/>
    <property type="project" value="PomBase"/>
</dbReference>
<dbReference type="GO" id="GO:0070762">
    <property type="term" value="C:nuclear pore transmembrane ring"/>
    <property type="evidence" value="ECO:0000318"/>
    <property type="project" value="GO_Central"/>
</dbReference>
<dbReference type="GO" id="GO:0017056">
    <property type="term" value="F:structural constituent of nuclear pore"/>
    <property type="evidence" value="ECO:0007669"/>
    <property type="project" value="InterPro"/>
</dbReference>
<dbReference type="GO" id="GO:0051028">
    <property type="term" value="P:mRNA transport"/>
    <property type="evidence" value="ECO:0007669"/>
    <property type="project" value="UniProtKB-KW"/>
</dbReference>
<dbReference type="GO" id="GO:0006999">
    <property type="term" value="P:nuclear pore organization"/>
    <property type="evidence" value="ECO:0000318"/>
    <property type="project" value="GO_Central"/>
</dbReference>
<dbReference type="GO" id="GO:0006606">
    <property type="term" value="P:protein import into nucleus"/>
    <property type="evidence" value="ECO:0000318"/>
    <property type="project" value="GO_Central"/>
</dbReference>
<dbReference type="InterPro" id="IPR056541">
    <property type="entry name" value="Ig-like_POM152"/>
</dbReference>
<dbReference type="InterPro" id="IPR056542">
    <property type="entry name" value="Ig-like_POM152_1st"/>
</dbReference>
<dbReference type="InterPro" id="IPR056543">
    <property type="entry name" value="Ig-like_POM152_9th"/>
</dbReference>
<dbReference type="InterPro" id="IPR056544">
    <property type="entry name" value="Ig_POM152"/>
</dbReference>
<dbReference type="InterPro" id="IPR037701">
    <property type="entry name" value="Pom152"/>
</dbReference>
<dbReference type="InterPro" id="IPR056540">
    <property type="entry name" value="TMD_POM152"/>
</dbReference>
<dbReference type="PANTHER" id="PTHR28206">
    <property type="entry name" value="NUCLEOPORIN POM152"/>
    <property type="match status" value="1"/>
</dbReference>
<dbReference type="PANTHER" id="PTHR28206:SF1">
    <property type="entry name" value="NUCLEOPORIN POM152"/>
    <property type="match status" value="1"/>
</dbReference>
<dbReference type="Pfam" id="PF24312">
    <property type="entry name" value="Ig-like_POM152"/>
    <property type="match status" value="3"/>
</dbReference>
<dbReference type="Pfam" id="PF24519">
    <property type="entry name" value="Ig-like_Pom152_1"/>
    <property type="match status" value="1"/>
</dbReference>
<dbReference type="Pfam" id="PF24527">
    <property type="entry name" value="Ig-like_Pom152_9"/>
    <property type="match status" value="1"/>
</dbReference>
<dbReference type="Pfam" id="PF23664">
    <property type="entry name" value="Ig_Pom152"/>
    <property type="match status" value="2"/>
</dbReference>
<dbReference type="Pfam" id="PF24097">
    <property type="entry name" value="TMD_POM152"/>
    <property type="match status" value="1"/>
</dbReference>
<name>PO152_SCHPO</name>